<feature type="chain" id="PRO_0000271399" description="Serine-threonine kinase receptor-associated protein">
    <location>
        <begin position="1"/>
        <end position="350"/>
    </location>
</feature>
<feature type="repeat" description="WD 1">
    <location>
        <begin position="12"/>
        <end position="56"/>
    </location>
</feature>
<feature type="repeat" description="WD 2">
    <location>
        <begin position="57"/>
        <end position="96"/>
    </location>
</feature>
<feature type="repeat" description="WD 3">
    <location>
        <begin position="98"/>
        <end position="137"/>
    </location>
</feature>
<feature type="repeat" description="WD 4">
    <location>
        <begin position="141"/>
        <end position="179"/>
    </location>
</feature>
<feature type="repeat" description="WD 5">
    <location>
        <begin position="180"/>
        <end position="212"/>
    </location>
</feature>
<feature type="repeat" description="WD 6">
    <location>
        <begin position="221"/>
        <end position="262"/>
    </location>
</feature>
<feature type="repeat" description="WD 7">
    <location>
        <begin position="263"/>
        <end position="302"/>
    </location>
</feature>
<feature type="region of interest" description="Disordered" evidence="4">
    <location>
        <begin position="327"/>
        <end position="350"/>
    </location>
</feature>
<feature type="compositionally biased region" description="Polar residues" evidence="4">
    <location>
        <begin position="337"/>
        <end position="350"/>
    </location>
</feature>
<feature type="modified residue" description="Phosphoserine" evidence="2">
    <location>
        <position position="312"/>
    </location>
</feature>
<feature type="modified residue" description="Phosphoserine" evidence="2">
    <location>
        <position position="335"/>
    </location>
</feature>
<feature type="modified residue" description="Phosphoserine" evidence="2">
    <location>
        <position position="338"/>
    </location>
</feature>
<feature type="modified residue" description="Phosphotyrosine" evidence="3">
    <location>
        <position position="342"/>
    </location>
</feature>
<proteinExistence type="evidence at transcript level"/>
<comment type="function">
    <text evidence="2">The SMN complex catalyzes the assembly of small nuclear ribonucleoproteins (snRNPs), the building blocks of the spliceosome, and thereby plays an important role in the splicing of cellular pre-mRNAs. Most spliceosomal snRNPs contain a common set of Sm proteins SNRPB, SNRPD1, SNRPD2, SNRPD3, SNRPE, SNRPF and SNRPG that assemble in a heptameric protein ring on the Sm site of the small nuclear RNA to form the core snRNP (Sm core). In the cytosol, the Sm proteins SNRPD1, SNRPD2, SNRPE, SNRPF and SNRPG are trapped in an inactive 6S pICln-Sm complex by the chaperone CLNS1A that controls the assembly of the core snRNP. To assemble core snRNPs, the SMN complex accepts the trapped 5Sm proteins from CLNS1A forming an intermediate. Binding of snRNA inside 5Sm triggers eviction of the SMN complex, thereby allowing binding of SNRPD3 and SNRPB to complete assembly of the core snRNP. STRAP plays a role in the cellular distribution of the SMN complex. Negatively regulates TGF-beta signaling but positively regulates the PDPK1 kinase activity by enhancing its autophosphorylation and by significantly reducing the association of PDPK1 with 14-3-3 protein (By similarity).</text>
</comment>
<comment type="subunit">
    <text evidence="2">Part of the core SMN complex that contains SMN1, GEMIN2/SIP1, DDX20/GEMIN3, GEMIN4, GEMIN5, GEMIN6, GEMIN7, GEMIN8 and STRAP/UNRIP. Part of the SMN-Sm complex that contains SMN1, GEMIN2/SIP1, DDX20/GEMIN3, GEMIN4, GEMIN5, GEMIN6, GEMIN7, GEMIN8, STRAP/UNRIP and the Sm proteins SNRPB, SNRPD1, SNRPD2, SNRPD3, SNRPE, SNRPF and SNRPG. Interacts directly with GEMIN6 and GEMIN7. Associates with the SMN complex in the cytoplasm but not in the nucleus. Also interacts with CSDE1/UNR and MAWBP. Interacts with PDPK1. Interacts with TRIM48.</text>
</comment>
<comment type="subcellular location">
    <subcellularLocation>
        <location evidence="1">Cytoplasm</location>
    </subcellularLocation>
    <subcellularLocation>
        <location evidence="1">Nucleus</location>
    </subcellularLocation>
    <text evidence="1">Localized predominantly in the cytoplasm but also found in the nucleus.</text>
</comment>
<comment type="similarity">
    <text evidence="5">Belongs to the WD repeat STRAP family.</text>
</comment>
<organism>
    <name type="scientific">Bos taurus</name>
    <name type="common">Bovine</name>
    <dbReference type="NCBI Taxonomy" id="9913"/>
    <lineage>
        <taxon>Eukaryota</taxon>
        <taxon>Metazoa</taxon>
        <taxon>Chordata</taxon>
        <taxon>Craniata</taxon>
        <taxon>Vertebrata</taxon>
        <taxon>Euteleostomi</taxon>
        <taxon>Mammalia</taxon>
        <taxon>Eutheria</taxon>
        <taxon>Laurasiatheria</taxon>
        <taxon>Artiodactyla</taxon>
        <taxon>Ruminantia</taxon>
        <taxon>Pecora</taxon>
        <taxon>Bovidae</taxon>
        <taxon>Bovinae</taxon>
        <taxon>Bos</taxon>
    </lineage>
</organism>
<evidence type="ECO:0000250" key="1"/>
<evidence type="ECO:0000250" key="2">
    <source>
        <dbReference type="UniProtKB" id="Q9Y3F4"/>
    </source>
</evidence>
<evidence type="ECO:0000250" key="3">
    <source>
        <dbReference type="UniProtKB" id="Q9Z1Z2"/>
    </source>
</evidence>
<evidence type="ECO:0000256" key="4">
    <source>
        <dbReference type="SAM" id="MobiDB-lite"/>
    </source>
</evidence>
<evidence type="ECO:0000305" key="5"/>
<keyword id="KW-0963">Cytoplasm</keyword>
<keyword id="KW-0507">mRNA processing</keyword>
<keyword id="KW-0508">mRNA splicing</keyword>
<keyword id="KW-0539">Nucleus</keyword>
<keyword id="KW-0597">Phosphoprotein</keyword>
<keyword id="KW-1185">Reference proteome</keyword>
<keyword id="KW-0677">Repeat</keyword>
<keyword id="KW-0853">WD repeat</keyword>
<protein>
    <recommendedName>
        <fullName>Serine-threonine kinase receptor-associated protein</fullName>
    </recommendedName>
</protein>
<reference key="1">
    <citation type="journal article" date="2005" name="BMC Genomics">
        <title>Characterization of 954 bovine full-CDS cDNA sequences.</title>
        <authorList>
            <person name="Harhay G.P."/>
            <person name="Sonstegard T.S."/>
            <person name="Keele J.W."/>
            <person name="Heaton M.P."/>
            <person name="Clawson M.L."/>
            <person name="Snelling W.M."/>
            <person name="Wiedmann R.T."/>
            <person name="Van Tassell C.P."/>
            <person name="Smith T.P.L."/>
        </authorList>
    </citation>
    <scope>NUCLEOTIDE SEQUENCE [LARGE SCALE MRNA]</scope>
</reference>
<reference key="2">
    <citation type="submission" date="2006-08" db="EMBL/GenBank/DDBJ databases">
        <authorList>
            <consortium name="NIH - Mammalian Gene Collection (MGC) project"/>
        </authorList>
    </citation>
    <scope>NUCLEOTIDE SEQUENCE [LARGE SCALE MRNA]</scope>
    <source>
        <strain>Hereford</strain>
        <tissue>Fetal muscle</tissue>
    </source>
</reference>
<gene>
    <name type="primary">STRAP</name>
</gene>
<name>STRAP_BOVIN</name>
<sequence>MAMRQTPLTCSGHTRPVVDLAFSGITPYGYFLISACKDGKPMLRQGDTGDWIGTFLGHKGAVWGATLNKDATKAATAAADFTAKVWDAVSGDELMTLAHKHIVKTVDFTQDSNYLLTGGQDKLLRIYDLNKPEAEPKEISGHTSGIKKALWCSEDKQILSADDKTVRLWDHATMTEVKSLNFNMSVSSMEYIPEGEILVITYGRSIAFHSAVSLDPIKSFEAPATINSASLHPEKEFVVAGGEDFKLYKYDYNSGEELESYKGHFGPIHCVRFSPDGELYASGSEDGTLRLWQTVVGKTYGLWKCVLPEEDSGELAKPKINFPETAEEELEEIASENSDSIYSSTPEVKA</sequence>
<accession>Q5E959</accession>
<dbReference type="EMBL" id="BT021061">
    <property type="protein sequence ID" value="AAX09078.1"/>
    <property type="molecule type" value="mRNA"/>
</dbReference>
<dbReference type="EMBL" id="BC119959">
    <property type="protein sequence ID" value="AAI19960.1"/>
    <property type="molecule type" value="mRNA"/>
</dbReference>
<dbReference type="RefSeq" id="NP_001015567.1">
    <property type="nucleotide sequence ID" value="NM_001015567.2"/>
</dbReference>
<dbReference type="SMR" id="Q5E959"/>
<dbReference type="FunCoup" id="Q5E959">
    <property type="interactions" value="3050"/>
</dbReference>
<dbReference type="STRING" id="9913.ENSBTAP00000018840"/>
<dbReference type="PaxDb" id="9913-ENSBTAP00000018840"/>
<dbReference type="PeptideAtlas" id="Q5E959"/>
<dbReference type="Ensembl" id="ENSBTAT00000018840.6">
    <property type="protein sequence ID" value="ENSBTAP00000018840.5"/>
    <property type="gene ID" value="ENSBTAG00000014175.6"/>
</dbReference>
<dbReference type="GeneID" id="510201"/>
<dbReference type="KEGG" id="bta:510201"/>
<dbReference type="CTD" id="11171"/>
<dbReference type="VEuPathDB" id="HostDB:ENSBTAG00000014175"/>
<dbReference type="VGNC" id="VGNC:35420">
    <property type="gene designation" value="STRAP"/>
</dbReference>
<dbReference type="eggNOG" id="KOG0278">
    <property type="taxonomic scope" value="Eukaryota"/>
</dbReference>
<dbReference type="GeneTree" id="ENSGT00940000155197"/>
<dbReference type="HOGENOM" id="CLU_000288_57_6_1"/>
<dbReference type="InParanoid" id="Q5E959"/>
<dbReference type="OMA" id="DGFYGLW"/>
<dbReference type="OrthoDB" id="200206at2759"/>
<dbReference type="TreeFam" id="TF323287"/>
<dbReference type="Reactome" id="R-BTA-2173788">
    <property type="pathway name" value="Downregulation of TGF-beta receptor signaling"/>
</dbReference>
<dbReference type="Proteomes" id="UP000009136">
    <property type="component" value="Chromosome 5"/>
</dbReference>
<dbReference type="Bgee" id="ENSBTAG00000014175">
    <property type="expression patterns" value="Expressed in tongue muscle and 105 other cell types or tissues"/>
</dbReference>
<dbReference type="GO" id="GO:0005829">
    <property type="term" value="C:cytosol"/>
    <property type="evidence" value="ECO:0000250"/>
    <property type="project" value="UniProtKB"/>
</dbReference>
<dbReference type="GO" id="GO:0005634">
    <property type="term" value="C:nucleus"/>
    <property type="evidence" value="ECO:0007669"/>
    <property type="project" value="UniProtKB-SubCell"/>
</dbReference>
<dbReference type="GO" id="GO:0032797">
    <property type="term" value="C:SMN complex"/>
    <property type="evidence" value="ECO:0000250"/>
    <property type="project" value="UniProtKB"/>
</dbReference>
<dbReference type="GO" id="GO:0034719">
    <property type="term" value="C:SMN-Sm protein complex"/>
    <property type="evidence" value="ECO:0000250"/>
    <property type="project" value="UniProtKB"/>
</dbReference>
<dbReference type="GO" id="GO:0003729">
    <property type="term" value="F:mRNA binding"/>
    <property type="evidence" value="ECO:0007669"/>
    <property type="project" value="Ensembl"/>
</dbReference>
<dbReference type="GO" id="GO:0003723">
    <property type="term" value="F:RNA binding"/>
    <property type="evidence" value="ECO:0000318"/>
    <property type="project" value="GO_Central"/>
</dbReference>
<dbReference type="GO" id="GO:0005102">
    <property type="term" value="F:signaling receptor binding"/>
    <property type="evidence" value="ECO:0007669"/>
    <property type="project" value="Ensembl"/>
</dbReference>
<dbReference type="GO" id="GO:1990447">
    <property type="term" value="F:U2 snRNP binding"/>
    <property type="evidence" value="ECO:0007669"/>
    <property type="project" value="Ensembl"/>
</dbReference>
<dbReference type="GO" id="GO:0000380">
    <property type="term" value="P:alternative mRNA splicing, via spliceosome"/>
    <property type="evidence" value="ECO:0007669"/>
    <property type="project" value="Ensembl"/>
</dbReference>
<dbReference type="GO" id="GO:0030277">
    <property type="term" value="P:maintenance of gastrointestinal epithelium"/>
    <property type="evidence" value="ECO:0007669"/>
    <property type="project" value="Ensembl"/>
</dbReference>
<dbReference type="GO" id="GO:0000122">
    <property type="term" value="P:negative regulation of transcription by RNA polymerase II"/>
    <property type="evidence" value="ECO:0007669"/>
    <property type="project" value="Ensembl"/>
</dbReference>
<dbReference type="GO" id="GO:0030512">
    <property type="term" value="P:negative regulation of transforming growth factor beta receptor signaling pathway"/>
    <property type="evidence" value="ECO:0007669"/>
    <property type="project" value="Ensembl"/>
</dbReference>
<dbReference type="GO" id="GO:0030182">
    <property type="term" value="P:neuron differentiation"/>
    <property type="evidence" value="ECO:0007669"/>
    <property type="project" value="Ensembl"/>
</dbReference>
<dbReference type="GO" id="GO:0000387">
    <property type="term" value="P:spliceosomal snRNP assembly"/>
    <property type="evidence" value="ECO:0000250"/>
    <property type="project" value="UniProtKB"/>
</dbReference>
<dbReference type="CDD" id="cd00200">
    <property type="entry name" value="WD40"/>
    <property type="match status" value="1"/>
</dbReference>
<dbReference type="FunFam" id="2.130.10.10:FF:000133">
    <property type="entry name" value="Serine-threonine kinase receptor-associated protein"/>
    <property type="match status" value="1"/>
</dbReference>
<dbReference type="Gene3D" id="2.130.10.10">
    <property type="entry name" value="YVTN repeat-like/Quinoprotein amine dehydrogenase"/>
    <property type="match status" value="1"/>
</dbReference>
<dbReference type="InterPro" id="IPR020472">
    <property type="entry name" value="G-protein_beta_WD-40_rep"/>
</dbReference>
<dbReference type="InterPro" id="IPR015943">
    <property type="entry name" value="WD40/YVTN_repeat-like_dom_sf"/>
</dbReference>
<dbReference type="InterPro" id="IPR036322">
    <property type="entry name" value="WD40_repeat_dom_sf"/>
</dbReference>
<dbReference type="InterPro" id="IPR001680">
    <property type="entry name" value="WD40_rpt"/>
</dbReference>
<dbReference type="PANTHER" id="PTHR19877">
    <property type="entry name" value="EUKARYOTIC TRANSLATION INITIATION FACTOR 3 SUBUNIT I"/>
    <property type="match status" value="1"/>
</dbReference>
<dbReference type="PANTHER" id="PTHR19877:SF13">
    <property type="entry name" value="SERINE-THREONINE KINASE RECEPTOR-ASSOCIATED PROTEIN"/>
    <property type="match status" value="1"/>
</dbReference>
<dbReference type="Pfam" id="PF00400">
    <property type="entry name" value="WD40"/>
    <property type="match status" value="6"/>
</dbReference>
<dbReference type="PRINTS" id="PR00320">
    <property type="entry name" value="GPROTEINBRPT"/>
</dbReference>
<dbReference type="SMART" id="SM00320">
    <property type="entry name" value="WD40"/>
    <property type="match status" value="7"/>
</dbReference>
<dbReference type="SUPFAM" id="SSF50978">
    <property type="entry name" value="WD40 repeat-like"/>
    <property type="match status" value="1"/>
</dbReference>
<dbReference type="PROSITE" id="PS00678">
    <property type="entry name" value="WD_REPEATS_1"/>
    <property type="match status" value="1"/>
</dbReference>
<dbReference type="PROSITE" id="PS50082">
    <property type="entry name" value="WD_REPEATS_2"/>
    <property type="match status" value="4"/>
</dbReference>
<dbReference type="PROSITE" id="PS50294">
    <property type="entry name" value="WD_REPEATS_REGION"/>
    <property type="match status" value="1"/>
</dbReference>